<reference key="1">
    <citation type="journal article" date="2003" name="J. Bacteriol.">
        <title>Comparative analyses of the complete genome sequences of Pierce's disease and citrus variegated chlorosis strains of Xylella fastidiosa.</title>
        <authorList>
            <person name="Van Sluys M.A."/>
            <person name="de Oliveira M.C."/>
            <person name="Monteiro-Vitorello C.B."/>
            <person name="Miyaki C.Y."/>
            <person name="Furlan L.R."/>
            <person name="Camargo L.E.A."/>
            <person name="da Silva A.C.R."/>
            <person name="Moon D.H."/>
            <person name="Takita M.A."/>
            <person name="Lemos E.G.M."/>
            <person name="Machado M.A."/>
            <person name="Ferro M.I.T."/>
            <person name="da Silva F.R."/>
            <person name="Goldman M.H.S."/>
            <person name="Goldman G.H."/>
            <person name="Lemos M.V.F."/>
            <person name="El-Dorry H."/>
            <person name="Tsai S.M."/>
            <person name="Carrer H."/>
            <person name="Carraro D.M."/>
            <person name="de Oliveira R.C."/>
            <person name="Nunes L.R."/>
            <person name="Siqueira W.J."/>
            <person name="Coutinho L.L."/>
            <person name="Kimura E.T."/>
            <person name="Ferro E.S."/>
            <person name="Harakava R."/>
            <person name="Kuramae E.E."/>
            <person name="Marino C.L."/>
            <person name="Giglioti E."/>
            <person name="Abreu I.L."/>
            <person name="Alves L.M.C."/>
            <person name="do Amaral A.M."/>
            <person name="Baia G.S."/>
            <person name="Blanco S.R."/>
            <person name="Brito M.S."/>
            <person name="Cannavan F.S."/>
            <person name="Celestino A.V."/>
            <person name="da Cunha A.F."/>
            <person name="Fenille R.C."/>
            <person name="Ferro J.A."/>
            <person name="Formighieri E.F."/>
            <person name="Kishi L.T."/>
            <person name="Leoni S.G."/>
            <person name="Oliveira A.R."/>
            <person name="Rosa V.E. Jr."/>
            <person name="Sassaki F.T."/>
            <person name="Sena J.A.D."/>
            <person name="de Souza A.A."/>
            <person name="Truffi D."/>
            <person name="Tsukumo F."/>
            <person name="Yanai G.M."/>
            <person name="Zaros L.G."/>
            <person name="Civerolo E.L."/>
            <person name="Simpson A.J.G."/>
            <person name="Almeida N.F. Jr."/>
            <person name="Setubal J.C."/>
            <person name="Kitajima J.P."/>
        </authorList>
    </citation>
    <scope>NUCLEOTIDE SEQUENCE [LARGE SCALE GENOMIC DNA]</scope>
    <source>
        <strain>Temecula1 / ATCC 700964</strain>
    </source>
</reference>
<accession>Q87AI0</accession>
<name>ALF1_XYLFT</name>
<keyword id="KW-0324">Glycolysis</keyword>
<keyword id="KW-0456">Lyase</keyword>
<keyword id="KW-1185">Reference proteome</keyword>
<sequence length="334" mass="36179">MSIEQLAETAQAMVASGKGIIAIDESAGTIAKRFSSVGIENIEENRRAYRELLLTTPKLSDYISGAILFDETIRQSTKAGVPFPKYMAEHGIIPGIKVDKGAYPLAGCPGELVTEGLDGLRARLEEYYKLGARFAKWRAVINIGDDIPSGMCIDANVHALARYAALCQEQGLVPMVEPEVIMDGNHDISAAYEVTEATLRSLFNALYEQNVVLEGTILKASMVIPGTDCEEQASIDEVAESTVMCLKSTVPAILPGIVFLSGGQTDAQSTAHLNAMNQFDPLPWPLSFSYGRAMQQAALKLWSQDMKGNFAKAQQVVYERAKENGLAALGKWKG</sequence>
<feature type="chain" id="PRO_0000216918" description="Probable fructose-bisphosphate aldolase class 1">
    <location>
        <begin position="1"/>
        <end position="334"/>
    </location>
</feature>
<proteinExistence type="inferred from homology"/>
<organism>
    <name type="scientific">Xylella fastidiosa (strain Temecula1 / ATCC 700964)</name>
    <dbReference type="NCBI Taxonomy" id="183190"/>
    <lineage>
        <taxon>Bacteria</taxon>
        <taxon>Pseudomonadati</taxon>
        <taxon>Pseudomonadota</taxon>
        <taxon>Gammaproteobacteria</taxon>
        <taxon>Lysobacterales</taxon>
        <taxon>Lysobacteraceae</taxon>
        <taxon>Xylella</taxon>
    </lineage>
</organism>
<protein>
    <recommendedName>
        <fullName>Probable fructose-bisphosphate aldolase class 1</fullName>
        <ecNumber>4.1.2.13</ecNumber>
    </recommendedName>
    <alternativeName>
        <fullName>Fructose-bisphosphate aldolase class I</fullName>
        <shortName>FBP aldolase</shortName>
    </alternativeName>
</protein>
<comment type="catalytic activity">
    <reaction>
        <text>beta-D-fructose 1,6-bisphosphate = D-glyceraldehyde 3-phosphate + dihydroxyacetone phosphate</text>
        <dbReference type="Rhea" id="RHEA:14729"/>
        <dbReference type="ChEBI" id="CHEBI:32966"/>
        <dbReference type="ChEBI" id="CHEBI:57642"/>
        <dbReference type="ChEBI" id="CHEBI:59776"/>
        <dbReference type="EC" id="4.1.2.13"/>
    </reaction>
</comment>
<comment type="pathway">
    <text>Carbohydrate degradation; glycolysis; D-glyceraldehyde 3-phosphate and glycerone phosphate from D-glucose: step 4/4.</text>
</comment>
<comment type="similarity">
    <text evidence="1">Belongs to the class I fructose-bisphosphate aldolase family.</text>
</comment>
<dbReference type="EC" id="4.1.2.13"/>
<dbReference type="EMBL" id="AE009442">
    <property type="protein sequence ID" value="AAO29677.1"/>
    <property type="molecule type" value="Genomic_DNA"/>
</dbReference>
<dbReference type="RefSeq" id="WP_004084446.1">
    <property type="nucleotide sequence ID" value="NC_004556.1"/>
</dbReference>
<dbReference type="SMR" id="Q87AI0"/>
<dbReference type="KEGG" id="xft:PD_1845"/>
<dbReference type="HOGENOM" id="CLU_031243_0_0_6"/>
<dbReference type="UniPathway" id="UPA00109">
    <property type="reaction ID" value="UER00183"/>
</dbReference>
<dbReference type="Proteomes" id="UP000002516">
    <property type="component" value="Chromosome"/>
</dbReference>
<dbReference type="GO" id="GO:0004332">
    <property type="term" value="F:fructose-bisphosphate aldolase activity"/>
    <property type="evidence" value="ECO:0007669"/>
    <property type="project" value="UniProtKB-EC"/>
</dbReference>
<dbReference type="GO" id="GO:0006096">
    <property type="term" value="P:glycolytic process"/>
    <property type="evidence" value="ECO:0007669"/>
    <property type="project" value="UniProtKB-UniPathway"/>
</dbReference>
<dbReference type="CDD" id="cd00948">
    <property type="entry name" value="FBP_aldolase_I_a"/>
    <property type="match status" value="1"/>
</dbReference>
<dbReference type="FunFam" id="3.20.20.70:FF:000140">
    <property type="entry name" value="Fructose-bisphosphate aldolase"/>
    <property type="match status" value="1"/>
</dbReference>
<dbReference type="Gene3D" id="3.20.20.70">
    <property type="entry name" value="Aldolase class I"/>
    <property type="match status" value="1"/>
</dbReference>
<dbReference type="InterPro" id="IPR029768">
    <property type="entry name" value="Aldolase_I_AS"/>
</dbReference>
<dbReference type="InterPro" id="IPR013785">
    <property type="entry name" value="Aldolase_TIM"/>
</dbReference>
<dbReference type="InterPro" id="IPR000741">
    <property type="entry name" value="FBA_I"/>
</dbReference>
<dbReference type="NCBIfam" id="NF033379">
    <property type="entry name" value="FrucBisAld_I"/>
    <property type="match status" value="1"/>
</dbReference>
<dbReference type="PANTHER" id="PTHR11627">
    <property type="entry name" value="FRUCTOSE-BISPHOSPHATE ALDOLASE"/>
    <property type="match status" value="1"/>
</dbReference>
<dbReference type="Pfam" id="PF00274">
    <property type="entry name" value="Glycolytic"/>
    <property type="match status" value="1"/>
</dbReference>
<dbReference type="SUPFAM" id="SSF51569">
    <property type="entry name" value="Aldolase"/>
    <property type="match status" value="1"/>
</dbReference>
<dbReference type="PROSITE" id="PS00158">
    <property type="entry name" value="ALDOLASE_CLASS_I"/>
    <property type="match status" value="1"/>
</dbReference>
<evidence type="ECO:0000305" key="1"/>
<gene>
    <name type="ordered locus">PD_1845</name>
</gene>